<feature type="chain" id="PRO_0000073103" description="Ovomucoid">
    <location>
        <begin position="1" status="less than"/>
        <end position="54" status="greater than"/>
    </location>
</feature>
<feature type="domain" description="Kazal-like" evidence="1">
    <location>
        <begin position="4"/>
        <end position="54"/>
    </location>
</feature>
<feature type="site" description="Reactive bond 3">
    <location>
        <begin position="16"/>
        <end position="17"/>
    </location>
</feature>
<feature type="glycosylation site" description="N-linked (GlcNAc...) asparagine">
    <location>
        <position position="43"/>
    </location>
</feature>
<feature type="disulfide bond">
    <location>
        <begin position="6"/>
        <end position="36"/>
    </location>
</feature>
<feature type="disulfide bond">
    <location>
        <begin position="14"/>
        <end position="33"/>
    </location>
</feature>
<feature type="disulfide bond">
    <location>
        <begin position="22"/>
        <end position="54"/>
    </location>
</feature>
<feature type="non-terminal residue">
    <location>
        <position position="1"/>
    </location>
</feature>
<feature type="non-terminal residue">
    <location>
        <position position="54"/>
    </location>
</feature>
<evidence type="ECO:0000255" key="1">
    <source>
        <dbReference type="PROSITE-ProRule" id="PRU00798"/>
    </source>
</evidence>
<accession>P67892</accession>
<accession>P05568</accession>
<keyword id="KW-0903">Direct protein sequencing</keyword>
<keyword id="KW-1015">Disulfide bond</keyword>
<keyword id="KW-0325">Glycoprotein</keyword>
<keyword id="KW-0646">Protease inhibitor</keyword>
<keyword id="KW-0677">Repeat</keyword>
<keyword id="KW-0964">Secreted</keyword>
<keyword id="KW-0722">Serine protease inhibitor</keyword>
<dbReference type="PIR" id="C31440">
    <property type="entry name" value="C31440"/>
</dbReference>
<dbReference type="SMR" id="P67892"/>
<dbReference type="GO" id="GO:0005576">
    <property type="term" value="C:extracellular region"/>
    <property type="evidence" value="ECO:0007669"/>
    <property type="project" value="UniProtKB-SubCell"/>
</dbReference>
<dbReference type="GO" id="GO:0004867">
    <property type="term" value="F:serine-type endopeptidase inhibitor activity"/>
    <property type="evidence" value="ECO:0007669"/>
    <property type="project" value="UniProtKB-KW"/>
</dbReference>
<dbReference type="CDD" id="cd00104">
    <property type="entry name" value="KAZAL_FS"/>
    <property type="match status" value="1"/>
</dbReference>
<dbReference type="FunFam" id="3.30.60.30:FF:000037">
    <property type="entry name" value="Ovomucoid"/>
    <property type="match status" value="1"/>
</dbReference>
<dbReference type="Gene3D" id="3.30.60.30">
    <property type="match status" value="1"/>
</dbReference>
<dbReference type="InterPro" id="IPR050159">
    <property type="entry name" value="Kazal-type_SerProtInhib"/>
</dbReference>
<dbReference type="InterPro" id="IPR002350">
    <property type="entry name" value="Kazal_dom"/>
</dbReference>
<dbReference type="InterPro" id="IPR036058">
    <property type="entry name" value="Kazal_dom_sf"/>
</dbReference>
<dbReference type="InterPro" id="IPR001239">
    <property type="entry name" value="Prot_inh_Kazal-m"/>
</dbReference>
<dbReference type="PANTHER" id="PTHR47499:SF1">
    <property type="entry name" value="SERINE PROTEASE INHIBITOR KAZAL-TYPE 7"/>
    <property type="match status" value="1"/>
</dbReference>
<dbReference type="PANTHER" id="PTHR47499">
    <property type="entry name" value="SERINE PROTEASE INHIBITOR KAZAL-TYPE 7 SPINK7"/>
    <property type="match status" value="1"/>
</dbReference>
<dbReference type="Pfam" id="PF00050">
    <property type="entry name" value="Kazal_1"/>
    <property type="match status" value="1"/>
</dbReference>
<dbReference type="PRINTS" id="PR00290">
    <property type="entry name" value="KAZALINHBTR"/>
</dbReference>
<dbReference type="SMART" id="SM00280">
    <property type="entry name" value="KAZAL"/>
    <property type="match status" value="1"/>
</dbReference>
<dbReference type="SUPFAM" id="SSF100895">
    <property type="entry name" value="Kazal-type serine protease inhibitors"/>
    <property type="match status" value="1"/>
</dbReference>
<dbReference type="PROSITE" id="PS00282">
    <property type="entry name" value="KAZAL_1"/>
    <property type="match status" value="1"/>
</dbReference>
<dbReference type="PROSITE" id="PS51465">
    <property type="entry name" value="KAZAL_2"/>
    <property type="match status" value="1"/>
</dbReference>
<organism>
    <name type="scientific">Dendrocygna bicolor</name>
    <name type="common">Fulvous whistling-duck</name>
    <name type="synonym">Anas bicolor</name>
    <dbReference type="NCBI Taxonomy" id="8874"/>
    <lineage>
        <taxon>Eukaryota</taxon>
        <taxon>Metazoa</taxon>
        <taxon>Chordata</taxon>
        <taxon>Craniata</taxon>
        <taxon>Vertebrata</taxon>
        <taxon>Euteleostomi</taxon>
        <taxon>Archelosauria</taxon>
        <taxon>Archosauria</taxon>
        <taxon>Dinosauria</taxon>
        <taxon>Saurischia</taxon>
        <taxon>Theropoda</taxon>
        <taxon>Coelurosauria</taxon>
        <taxon>Aves</taxon>
        <taxon>Neognathae</taxon>
        <taxon>Galloanserae</taxon>
        <taxon>Anseriformes</taxon>
        <taxon>Anatidae</taxon>
        <taxon>Dendrocygninae</taxon>
        <taxon>Dendrocygna</taxon>
    </lineage>
</organism>
<name>IOVO_DENBI</name>
<reference key="1">
    <citation type="journal article" date="1987" name="Biochemistry">
        <title>Ovomucoid third domains from 100 avian species: isolation, sequences, and hypervariability of enzyme-inhibitor contact residues.</title>
        <authorList>
            <person name="Laskowski M. Jr."/>
            <person name="Kato I."/>
            <person name="Ardelt W."/>
            <person name="Cook J."/>
            <person name="Denton A."/>
            <person name="Empie M.W."/>
            <person name="Kohr W.J."/>
            <person name="Park S.J."/>
            <person name="Parks K."/>
            <person name="Schatzley B.L."/>
            <person name="Schoenberger O.L."/>
            <person name="Tashiro M."/>
            <person name="Vichot G."/>
            <person name="Whatley H.E."/>
            <person name="Wieczorek A."/>
            <person name="Wieczorek M."/>
        </authorList>
    </citation>
    <scope>PROTEIN SEQUENCE</scope>
</reference>
<proteinExistence type="evidence at protein level"/>
<protein>
    <recommendedName>
        <fullName>Ovomucoid</fullName>
    </recommendedName>
</protein>
<sequence>VATVDCSDYPKPACTLEYMPLCGSDNKTYGNKCNFCNAVVDSNGTLTLSHFGKC</sequence>
<comment type="subcellular location">
    <subcellularLocation>
        <location>Secreted</location>
    </subcellularLocation>
</comment>
<comment type="domain">
    <text>Avian ovomucoid consists of three homologous, tandem Kazal family inhibitory domains.</text>
</comment>